<keyword id="KW-0240">DNA-directed RNA polymerase</keyword>
<keyword id="KW-0548">Nucleotidyltransferase</keyword>
<keyword id="KW-0804">Transcription</keyword>
<keyword id="KW-0808">Transferase</keyword>
<proteinExistence type="inferred from homology"/>
<dbReference type="EC" id="2.7.7.6" evidence="1"/>
<dbReference type="EMBL" id="CP000511">
    <property type="protein sequence ID" value="ABM12270.1"/>
    <property type="molecule type" value="Genomic_DNA"/>
</dbReference>
<dbReference type="RefSeq" id="WP_011778696.1">
    <property type="nucleotide sequence ID" value="NZ_JACKSD010000066.1"/>
</dbReference>
<dbReference type="SMR" id="A1T520"/>
<dbReference type="STRING" id="350058.Mvan_1436"/>
<dbReference type="KEGG" id="mva:Mvan_1436"/>
<dbReference type="eggNOG" id="COG0202">
    <property type="taxonomic scope" value="Bacteria"/>
</dbReference>
<dbReference type="HOGENOM" id="CLU_053084_0_1_11"/>
<dbReference type="Proteomes" id="UP000009159">
    <property type="component" value="Chromosome"/>
</dbReference>
<dbReference type="GO" id="GO:0005737">
    <property type="term" value="C:cytoplasm"/>
    <property type="evidence" value="ECO:0007669"/>
    <property type="project" value="UniProtKB-ARBA"/>
</dbReference>
<dbReference type="GO" id="GO:0000428">
    <property type="term" value="C:DNA-directed RNA polymerase complex"/>
    <property type="evidence" value="ECO:0007669"/>
    <property type="project" value="UniProtKB-KW"/>
</dbReference>
<dbReference type="GO" id="GO:0003677">
    <property type="term" value="F:DNA binding"/>
    <property type="evidence" value="ECO:0007669"/>
    <property type="project" value="UniProtKB-UniRule"/>
</dbReference>
<dbReference type="GO" id="GO:0003899">
    <property type="term" value="F:DNA-directed RNA polymerase activity"/>
    <property type="evidence" value="ECO:0007669"/>
    <property type="project" value="UniProtKB-UniRule"/>
</dbReference>
<dbReference type="GO" id="GO:0046983">
    <property type="term" value="F:protein dimerization activity"/>
    <property type="evidence" value="ECO:0007669"/>
    <property type="project" value="InterPro"/>
</dbReference>
<dbReference type="GO" id="GO:0006351">
    <property type="term" value="P:DNA-templated transcription"/>
    <property type="evidence" value="ECO:0007669"/>
    <property type="project" value="UniProtKB-UniRule"/>
</dbReference>
<dbReference type="CDD" id="cd06928">
    <property type="entry name" value="RNAP_alpha_NTD"/>
    <property type="match status" value="1"/>
</dbReference>
<dbReference type="FunFam" id="1.10.150.20:FF:000001">
    <property type="entry name" value="DNA-directed RNA polymerase subunit alpha"/>
    <property type="match status" value="1"/>
</dbReference>
<dbReference type="FunFam" id="2.170.120.12:FF:000001">
    <property type="entry name" value="DNA-directed RNA polymerase subunit alpha"/>
    <property type="match status" value="1"/>
</dbReference>
<dbReference type="Gene3D" id="1.10.150.20">
    <property type="entry name" value="5' to 3' exonuclease, C-terminal subdomain"/>
    <property type="match status" value="1"/>
</dbReference>
<dbReference type="Gene3D" id="2.170.120.12">
    <property type="entry name" value="DNA-directed RNA polymerase, insert domain"/>
    <property type="match status" value="1"/>
</dbReference>
<dbReference type="Gene3D" id="3.30.1360.10">
    <property type="entry name" value="RNA polymerase, RBP11-like subunit"/>
    <property type="match status" value="1"/>
</dbReference>
<dbReference type="HAMAP" id="MF_00059">
    <property type="entry name" value="RNApol_bact_RpoA"/>
    <property type="match status" value="1"/>
</dbReference>
<dbReference type="InterPro" id="IPR011262">
    <property type="entry name" value="DNA-dir_RNA_pol_insert"/>
</dbReference>
<dbReference type="InterPro" id="IPR011263">
    <property type="entry name" value="DNA-dir_RNA_pol_RpoA/D/Rpb3"/>
</dbReference>
<dbReference type="InterPro" id="IPR011773">
    <property type="entry name" value="DNA-dir_RpoA"/>
</dbReference>
<dbReference type="InterPro" id="IPR036603">
    <property type="entry name" value="RBP11-like"/>
</dbReference>
<dbReference type="InterPro" id="IPR011260">
    <property type="entry name" value="RNAP_asu_C"/>
</dbReference>
<dbReference type="InterPro" id="IPR036643">
    <property type="entry name" value="RNApol_insert_sf"/>
</dbReference>
<dbReference type="NCBIfam" id="NF003513">
    <property type="entry name" value="PRK05182.1-2"/>
    <property type="match status" value="1"/>
</dbReference>
<dbReference type="NCBIfam" id="NF003514">
    <property type="entry name" value="PRK05182.1-4"/>
    <property type="match status" value="1"/>
</dbReference>
<dbReference type="NCBIfam" id="NF003519">
    <property type="entry name" value="PRK05182.2-5"/>
    <property type="match status" value="1"/>
</dbReference>
<dbReference type="NCBIfam" id="TIGR02027">
    <property type="entry name" value="rpoA"/>
    <property type="match status" value="1"/>
</dbReference>
<dbReference type="Pfam" id="PF01000">
    <property type="entry name" value="RNA_pol_A_bac"/>
    <property type="match status" value="1"/>
</dbReference>
<dbReference type="Pfam" id="PF03118">
    <property type="entry name" value="RNA_pol_A_CTD"/>
    <property type="match status" value="1"/>
</dbReference>
<dbReference type="Pfam" id="PF01193">
    <property type="entry name" value="RNA_pol_L"/>
    <property type="match status" value="1"/>
</dbReference>
<dbReference type="SMART" id="SM00662">
    <property type="entry name" value="RPOLD"/>
    <property type="match status" value="1"/>
</dbReference>
<dbReference type="SUPFAM" id="SSF47789">
    <property type="entry name" value="C-terminal domain of RNA polymerase alpha subunit"/>
    <property type="match status" value="1"/>
</dbReference>
<dbReference type="SUPFAM" id="SSF56553">
    <property type="entry name" value="Insert subdomain of RNA polymerase alpha subunit"/>
    <property type="match status" value="1"/>
</dbReference>
<dbReference type="SUPFAM" id="SSF55257">
    <property type="entry name" value="RBP11-like subunits of RNA polymerase"/>
    <property type="match status" value="1"/>
</dbReference>
<organism>
    <name type="scientific">Mycolicibacterium vanbaalenii (strain DSM 7251 / JCM 13017 / BCRC 16820 / KCTC 9966 / NRRL B-24157 / PYR-1)</name>
    <name type="common">Mycobacterium vanbaalenii</name>
    <dbReference type="NCBI Taxonomy" id="350058"/>
    <lineage>
        <taxon>Bacteria</taxon>
        <taxon>Bacillati</taxon>
        <taxon>Actinomycetota</taxon>
        <taxon>Actinomycetes</taxon>
        <taxon>Mycobacteriales</taxon>
        <taxon>Mycobacteriaceae</taxon>
        <taxon>Mycolicibacterium</taxon>
    </lineage>
</organism>
<accession>A1T520</accession>
<feature type="chain" id="PRO_0000296839" description="DNA-directed RNA polymerase subunit alpha">
    <location>
        <begin position="1"/>
        <end position="350"/>
    </location>
</feature>
<feature type="region of interest" description="Alpha N-terminal domain (alpha-NTD)" evidence="1">
    <location>
        <begin position="1"/>
        <end position="226"/>
    </location>
</feature>
<feature type="region of interest" description="Alpha C-terminal domain (alpha-CTD)" evidence="1">
    <location>
        <begin position="241"/>
        <end position="350"/>
    </location>
</feature>
<feature type="region of interest" description="Disordered" evidence="2">
    <location>
        <begin position="328"/>
        <end position="350"/>
    </location>
</feature>
<feature type="compositionally biased region" description="Acidic residues" evidence="2">
    <location>
        <begin position="336"/>
        <end position="350"/>
    </location>
</feature>
<evidence type="ECO:0000255" key="1">
    <source>
        <dbReference type="HAMAP-Rule" id="MF_00059"/>
    </source>
</evidence>
<evidence type="ECO:0000256" key="2">
    <source>
        <dbReference type="SAM" id="MobiDB-lite"/>
    </source>
</evidence>
<gene>
    <name evidence="1" type="primary">rpoA</name>
    <name type="ordered locus">Mvan_1436</name>
</gene>
<protein>
    <recommendedName>
        <fullName evidence="1">DNA-directed RNA polymerase subunit alpha</fullName>
        <shortName evidence="1">RNAP subunit alpha</shortName>
        <ecNumber evidence="1">2.7.7.6</ecNumber>
    </recommendedName>
    <alternativeName>
        <fullName evidence="1">RNA polymerase subunit alpha</fullName>
    </alternativeName>
    <alternativeName>
        <fullName evidence="1">Transcriptase subunit alpha</fullName>
    </alternativeName>
</protein>
<sequence length="350" mass="38019">MLISQRPTLSEDVLAENRSQFVIEPLEPGFGYTLGNSLRRTLLSSIPGAAVTSIRIDGVLHEFTTVPGVKEDVTDIILNLKGLVVSSEEDEPVTMYLRKQGPGEVTAGDIVPPAGVTVHNPDMHIATLNDKGKLEVELVVERGRGYVPAVQNKASGAEIGRIPVDSIYSPVLKVTYKVEATRVEQRTDFDKLILDVETKNSITPRDALASAGKTLVELFGLARELNVEAEGIEIGPSPAEADQAAHFALPIDDLDLTVRSYNCLKREGVHTVGELVARTESDLLDIRNFGQKSIDEVKIKLHQLGLSLKDSPASFDPSEVAGYDVATGTWNSDAGYDLEDNQDYAETEQL</sequence>
<comment type="function">
    <text evidence="1">DNA-dependent RNA polymerase catalyzes the transcription of DNA into RNA using the four ribonucleoside triphosphates as substrates.</text>
</comment>
<comment type="catalytic activity">
    <reaction evidence="1">
        <text>RNA(n) + a ribonucleoside 5'-triphosphate = RNA(n+1) + diphosphate</text>
        <dbReference type="Rhea" id="RHEA:21248"/>
        <dbReference type="Rhea" id="RHEA-COMP:14527"/>
        <dbReference type="Rhea" id="RHEA-COMP:17342"/>
        <dbReference type="ChEBI" id="CHEBI:33019"/>
        <dbReference type="ChEBI" id="CHEBI:61557"/>
        <dbReference type="ChEBI" id="CHEBI:140395"/>
        <dbReference type="EC" id="2.7.7.6"/>
    </reaction>
</comment>
<comment type="subunit">
    <text evidence="1">Homodimer. The RNAP catalytic core consists of 2 alpha, 1 beta, 1 beta' and 1 omega subunit. When a sigma factor is associated with the core the holoenzyme is formed, which can initiate transcription.</text>
</comment>
<comment type="domain">
    <text evidence="1">The N-terminal domain is essential for RNAP assembly and basal transcription, whereas the C-terminal domain is involved in interaction with transcriptional regulators and with upstream promoter elements.</text>
</comment>
<comment type="similarity">
    <text evidence="1">Belongs to the RNA polymerase alpha chain family.</text>
</comment>
<reference key="1">
    <citation type="submission" date="2006-12" db="EMBL/GenBank/DDBJ databases">
        <title>Complete sequence of Mycobacterium vanbaalenii PYR-1.</title>
        <authorList>
            <consortium name="US DOE Joint Genome Institute"/>
            <person name="Copeland A."/>
            <person name="Lucas S."/>
            <person name="Lapidus A."/>
            <person name="Barry K."/>
            <person name="Detter J.C."/>
            <person name="Glavina del Rio T."/>
            <person name="Hammon N."/>
            <person name="Israni S."/>
            <person name="Dalin E."/>
            <person name="Tice H."/>
            <person name="Pitluck S."/>
            <person name="Singan V."/>
            <person name="Schmutz J."/>
            <person name="Larimer F."/>
            <person name="Land M."/>
            <person name="Hauser L."/>
            <person name="Kyrpides N."/>
            <person name="Anderson I.J."/>
            <person name="Miller C."/>
            <person name="Richardson P."/>
        </authorList>
    </citation>
    <scope>NUCLEOTIDE SEQUENCE [LARGE SCALE GENOMIC DNA]</scope>
    <source>
        <strain>DSM 7251 / JCM 13017 / BCRC 16820 / KCTC 9966 / NRRL B-24157 / PYR-1</strain>
    </source>
</reference>
<name>RPOA_MYCVP</name>